<comment type="function">
    <text evidence="1">Specifically methylates guanosine-37 in various tRNAs.</text>
</comment>
<comment type="catalytic activity">
    <reaction evidence="1">
        <text>guanosine(37) in tRNA + S-adenosyl-L-methionine = N(1)-methylguanosine(37) in tRNA + S-adenosyl-L-homocysteine + H(+)</text>
        <dbReference type="Rhea" id="RHEA:36899"/>
        <dbReference type="Rhea" id="RHEA-COMP:10145"/>
        <dbReference type="Rhea" id="RHEA-COMP:10147"/>
        <dbReference type="ChEBI" id="CHEBI:15378"/>
        <dbReference type="ChEBI" id="CHEBI:57856"/>
        <dbReference type="ChEBI" id="CHEBI:59789"/>
        <dbReference type="ChEBI" id="CHEBI:73542"/>
        <dbReference type="ChEBI" id="CHEBI:74269"/>
        <dbReference type="EC" id="2.1.1.228"/>
    </reaction>
</comment>
<comment type="subunit">
    <text evidence="1">Homodimer.</text>
</comment>
<comment type="subcellular location">
    <subcellularLocation>
        <location evidence="1">Cytoplasm</location>
    </subcellularLocation>
</comment>
<comment type="similarity">
    <text evidence="1">Belongs to the RNA methyltransferase TrmD family.</text>
</comment>
<feature type="chain" id="PRO_1000006464" description="tRNA (guanine-N(1)-)-methyltransferase">
    <location>
        <begin position="1"/>
        <end position="236"/>
    </location>
</feature>
<feature type="binding site" evidence="1">
    <location>
        <position position="112"/>
    </location>
    <ligand>
        <name>S-adenosyl-L-methionine</name>
        <dbReference type="ChEBI" id="CHEBI:59789"/>
    </ligand>
</feature>
<feature type="binding site" evidence="1">
    <location>
        <begin position="132"/>
        <end position="137"/>
    </location>
    <ligand>
        <name>S-adenosyl-L-methionine</name>
        <dbReference type="ChEBI" id="CHEBI:59789"/>
    </ligand>
</feature>
<sequence length="236" mass="26762">MKFTFVTLFENLVKPYFNDSILARAVENNKIDVNFINPRDHTTQKHFKVDEYMIGGGAGLLMMPQPLNDTLKKIKENDPDVHIVFLTPAAKKFNQKDAKRLAGKKHICFVCGRYEGIDERIVELWADEVFCVGDFILTGGELGALCLADAIARNIEGVLGNSQSLAIESFEDGLLEAPSFTKPDVFDGNFVVSEFLKGNHAKIRLLKNKMAHCKTRFFRPDLYQKLKPQIKEKHEK</sequence>
<protein>
    <recommendedName>
        <fullName evidence="1">tRNA (guanine-N(1)-)-methyltransferase</fullName>
        <ecNumber evidence="1">2.1.1.228</ecNumber>
    </recommendedName>
    <alternativeName>
        <fullName evidence="1">M1G-methyltransferase</fullName>
    </alternativeName>
    <alternativeName>
        <fullName evidence="1">tRNA [GM37] methyltransferase</fullName>
    </alternativeName>
</protein>
<reference key="1">
    <citation type="submission" date="2007-07" db="EMBL/GenBank/DDBJ databases">
        <title>Genome sequence of Campylobacter curvus 525.92 isolated from human feces.</title>
        <authorList>
            <person name="Fouts D.E."/>
            <person name="Mongodin E.F."/>
            <person name="Puiu D."/>
            <person name="Sebastian Y."/>
            <person name="Miller W.G."/>
            <person name="Mandrell R.E."/>
            <person name="Lastovica A.J."/>
            <person name="Nelson K.E."/>
        </authorList>
    </citation>
    <scope>NUCLEOTIDE SEQUENCE [LARGE SCALE GENOMIC DNA]</scope>
    <source>
        <strain>525.92</strain>
    </source>
</reference>
<evidence type="ECO:0000255" key="1">
    <source>
        <dbReference type="HAMAP-Rule" id="MF_00605"/>
    </source>
</evidence>
<keyword id="KW-0963">Cytoplasm</keyword>
<keyword id="KW-0489">Methyltransferase</keyword>
<keyword id="KW-1185">Reference proteome</keyword>
<keyword id="KW-0949">S-adenosyl-L-methionine</keyword>
<keyword id="KW-0808">Transferase</keyword>
<keyword id="KW-0819">tRNA processing</keyword>
<accession>A7GZB1</accession>
<proteinExistence type="inferred from homology"/>
<organism>
    <name type="scientific">Campylobacter curvus (strain 525.92)</name>
    <dbReference type="NCBI Taxonomy" id="360105"/>
    <lineage>
        <taxon>Bacteria</taxon>
        <taxon>Pseudomonadati</taxon>
        <taxon>Campylobacterota</taxon>
        <taxon>Epsilonproteobacteria</taxon>
        <taxon>Campylobacterales</taxon>
        <taxon>Campylobacteraceae</taxon>
        <taxon>Campylobacter</taxon>
    </lineage>
</organism>
<name>TRMD_CAMC5</name>
<gene>
    <name evidence="1" type="primary">trmD</name>
    <name type="ordered locus">Ccur92_12490</name>
    <name type="ORF">CCV52592_0679</name>
</gene>
<dbReference type="EC" id="2.1.1.228" evidence="1"/>
<dbReference type="EMBL" id="CP000767">
    <property type="protein sequence ID" value="EAU00408.1"/>
    <property type="molecule type" value="Genomic_DNA"/>
</dbReference>
<dbReference type="RefSeq" id="WP_009651371.1">
    <property type="nucleotide sequence ID" value="NC_009715.2"/>
</dbReference>
<dbReference type="SMR" id="A7GZB1"/>
<dbReference type="STRING" id="360105.CCV52592_0679"/>
<dbReference type="KEGG" id="ccv:CCV52592_0679"/>
<dbReference type="HOGENOM" id="CLU_047363_0_1_7"/>
<dbReference type="OrthoDB" id="9807416at2"/>
<dbReference type="Proteomes" id="UP000006380">
    <property type="component" value="Chromosome"/>
</dbReference>
<dbReference type="GO" id="GO:0005829">
    <property type="term" value="C:cytosol"/>
    <property type="evidence" value="ECO:0007669"/>
    <property type="project" value="TreeGrafter"/>
</dbReference>
<dbReference type="GO" id="GO:0052906">
    <property type="term" value="F:tRNA (guanine(37)-N1)-methyltransferase activity"/>
    <property type="evidence" value="ECO:0007669"/>
    <property type="project" value="UniProtKB-UniRule"/>
</dbReference>
<dbReference type="GO" id="GO:0002939">
    <property type="term" value="P:tRNA N1-guanine methylation"/>
    <property type="evidence" value="ECO:0007669"/>
    <property type="project" value="TreeGrafter"/>
</dbReference>
<dbReference type="CDD" id="cd18080">
    <property type="entry name" value="TrmD-like"/>
    <property type="match status" value="1"/>
</dbReference>
<dbReference type="Gene3D" id="3.40.1280.10">
    <property type="match status" value="1"/>
</dbReference>
<dbReference type="Gene3D" id="1.10.1270.20">
    <property type="entry name" value="tRNA(m1g37)methyltransferase, domain 2"/>
    <property type="match status" value="1"/>
</dbReference>
<dbReference type="HAMAP" id="MF_00605">
    <property type="entry name" value="TrmD"/>
    <property type="match status" value="1"/>
</dbReference>
<dbReference type="InterPro" id="IPR029028">
    <property type="entry name" value="Alpha/beta_knot_MTases"/>
</dbReference>
<dbReference type="InterPro" id="IPR023148">
    <property type="entry name" value="tRNA_m1G_MeTrfase_C_sf"/>
</dbReference>
<dbReference type="InterPro" id="IPR002649">
    <property type="entry name" value="tRNA_m1G_MeTrfase_TrmD"/>
</dbReference>
<dbReference type="InterPro" id="IPR029026">
    <property type="entry name" value="tRNA_m1G_MTases_N"/>
</dbReference>
<dbReference type="InterPro" id="IPR016009">
    <property type="entry name" value="tRNA_MeTrfase_TRMD/TRM10"/>
</dbReference>
<dbReference type="NCBIfam" id="NF000648">
    <property type="entry name" value="PRK00026.1"/>
    <property type="match status" value="1"/>
</dbReference>
<dbReference type="NCBIfam" id="TIGR00088">
    <property type="entry name" value="trmD"/>
    <property type="match status" value="1"/>
</dbReference>
<dbReference type="PANTHER" id="PTHR46417">
    <property type="entry name" value="TRNA (GUANINE-N(1)-)-METHYLTRANSFERASE"/>
    <property type="match status" value="1"/>
</dbReference>
<dbReference type="PANTHER" id="PTHR46417:SF1">
    <property type="entry name" value="TRNA (GUANINE-N(1)-)-METHYLTRANSFERASE"/>
    <property type="match status" value="1"/>
</dbReference>
<dbReference type="Pfam" id="PF01746">
    <property type="entry name" value="tRNA_m1G_MT"/>
    <property type="match status" value="1"/>
</dbReference>
<dbReference type="PIRSF" id="PIRSF000386">
    <property type="entry name" value="tRNA_mtase"/>
    <property type="match status" value="1"/>
</dbReference>
<dbReference type="SUPFAM" id="SSF75217">
    <property type="entry name" value="alpha/beta knot"/>
    <property type="match status" value="1"/>
</dbReference>